<evidence type="ECO:0000255" key="1">
    <source>
        <dbReference type="HAMAP-Rule" id="MF_00281"/>
    </source>
</evidence>
<organism>
    <name type="scientific">Listeria welshimeri serovar 6b (strain ATCC 35897 / DSM 20650 / CCUG 15529 / CIP 8149 / NCTC 11857 / SLCC 5334 / V8)</name>
    <dbReference type="NCBI Taxonomy" id="386043"/>
    <lineage>
        <taxon>Bacteria</taxon>
        <taxon>Bacillati</taxon>
        <taxon>Bacillota</taxon>
        <taxon>Bacilli</taxon>
        <taxon>Bacillales</taxon>
        <taxon>Listeriaceae</taxon>
        <taxon>Listeria</taxon>
    </lineage>
</organism>
<proteinExistence type="inferred from homology"/>
<accession>A0AHW2</accession>
<protein>
    <recommendedName>
        <fullName evidence="1">Phenylalanine--tRNA ligase alpha subunit</fullName>
        <ecNumber evidence="1">6.1.1.20</ecNumber>
    </recommendedName>
    <alternativeName>
        <fullName evidence="1">Phenylalanyl-tRNA synthetase alpha subunit</fullName>
        <shortName evidence="1">PheRS</shortName>
    </alternativeName>
</protein>
<reference key="1">
    <citation type="journal article" date="2006" name="J. Bacteriol.">
        <title>Whole-genome sequence of Listeria welshimeri reveals common steps in genome reduction with Listeria innocua as compared to Listeria monocytogenes.</title>
        <authorList>
            <person name="Hain T."/>
            <person name="Steinweg C."/>
            <person name="Kuenne C.T."/>
            <person name="Billion A."/>
            <person name="Ghai R."/>
            <person name="Chatterjee S.S."/>
            <person name="Domann E."/>
            <person name="Kaerst U."/>
            <person name="Goesmann A."/>
            <person name="Bekel T."/>
            <person name="Bartels D."/>
            <person name="Kaiser O."/>
            <person name="Meyer F."/>
            <person name="Puehler A."/>
            <person name="Weisshaar B."/>
            <person name="Wehland J."/>
            <person name="Liang C."/>
            <person name="Dandekar T."/>
            <person name="Lampidis R."/>
            <person name="Kreft J."/>
            <person name="Goebel W."/>
            <person name="Chakraborty T."/>
        </authorList>
    </citation>
    <scope>NUCLEOTIDE SEQUENCE [LARGE SCALE GENOMIC DNA]</scope>
    <source>
        <strain>ATCC 35897 / DSM 20650 / CCUG 15529 / CIP 8149 / NCTC 11857 / SLCC 5334 / V8</strain>
    </source>
</reference>
<feature type="chain" id="PRO_1000006857" description="Phenylalanine--tRNA ligase alpha subunit">
    <location>
        <begin position="1"/>
        <end position="350"/>
    </location>
</feature>
<feature type="binding site" evidence="1">
    <location>
        <position position="257"/>
    </location>
    <ligand>
        <name>Mg(2+)</name>
        <dbReference type="ChEBI" id="CHEBI:18420"/>
        <note>shared with beta subunit</note>
    </ligand>
</feature>
<dbReference type="EC" id="6.1.1.20" evidence="1"/>
<dbReference type="EMBL" id="AM263198">
    <property type="protein sequence ID" value="CAK20594.1"/>
    <property type="molecule type" value="Genomic_DNA"/>
</dbReference>
<dbReference type="RefSeq" id="WP_011701990.1">
    <property type="nucleotide sequence ID" value="NC_008555.1"/>
</dbReference>
<dbReference type="SMR" id="A0AHW2"/>
<dbReference type="STRING" id="386043.lwe1176"/>
<dbReference type="GeneID" id="61189059"/>
<dbReference type="KEGG" id="lwe:lwe1176"/>
<dbReference type="eggNOG" id="COG0016">
    <property type="taxonomic scope" value="Bacteria"/>
</dbReference>
<dbReference type="HOGENOM" id="CLU_025086_0_1_9"/>
<dbReference type="OrthoDB" id="9800719at2"/>
<dbReference type="Proteomes" id="UP000000779">
    <property type="component" value="Chromosome"/>
</dbReference>
<dbReference type="GO" id="GO:0005737">
    <property type="term" value="C:cytoplasm"/>
    <property type="evidence" value="ECO:0007669"/>
    <property type="project" value="UniProtKB-SubCell"/>
</dbReference>
<dbReference type="GO" id="GO:0005524">
    <property type="term" value="F:ATP binding"/>
    <property type="evidence" value="ECO:0007669"/>
    <property type="project" value="UniProtKB-UniRule"/>
</dbReference>
<dbReference type="GO" id="GO:0140096">
    <property type="term" value="F:catalytic activity, acting on a protein"/>
    <property type="evidence" value="ECO:0007669"/>
    <property type="project" value="UniProtKB-ARBA"/>
</dbReference>
<dbReference type="GO" id="GO:0000287">
    <property type="term" value="F:magnesium ion binding"/>
    <property type="evidence" value="ECO:0007669"/>
    <property type="project" value="UniProtKB-UniRule"/>
</dbReference>
<dbReference type="GO" id="GO:0004826">
    <property type="term" value="F:phenylalanine-tRNA ligase activity"/>
    <property type="evidence" value="ECO:0007669"/>
    <property type="project" value="UniProtKB-UniRule"/>
</dbReference>
<dbReference type="GO" id="GO:0016740">
    <property type="term" value="F:transferase activity"/>
    <property type="evidence" value="ECO:0007669"/>
    <property type="project" value="UniProtKB-ARBA"/>
</dbReference>
<dbReference type="GO" id="GO:0000049">
    <property type="term" value="F:tRNA binding"/>
    <property type="evidence" value="ECO:0007669"/>
    <property type="project" value="InterPro"/>
</dbReference>
<dbReference type="GO" id="GO:0006432">
    <property type="term" value="P:phenylalanyl-tRNA aminoacylation"/>
    <property type="evidence" value="ECO:0007669"/>
    <property type="project" value="UniProtKB-UniRule"/>
</dbReference>
<dbReference type="CDD" id="cd00496">
    <property type="entry name" value="PheRS_alpha_core"/>
    <property type="match status" value="1"/>
</dbReference>
<dbReference type="FunFam" id="3.30.930.10:FF:000003">
    <property type="entry name" value="Phenylalanine--tRNA ligase alpha subunit"/>
    <property type="match status" value="1"/>
</dbReference>
<dbReference type="Gene3D" id="3.30.930.10">
    <property type="entry name" value="Bira Bifunctional Protein, Domain 2"/>
    <property type="match status" value="1"/>
</dbReference>
<dbReference type="HAMAP" id="MF_00281">
    <property type="entry name" value="Phe_tRNA_synth_alpha1"/>
    <property type="match status" value="1"/>
</dbReference>
<dbReference type="InterPro" id="IPR006195">
    <property type="entry name" value="aa-tRNA-synth_II"/>
</dbReference>
<dbReference type="InterPro" id="IPR045864">
    <property type="entry name" value="aa-tRNA-synth_II/BPL/LPL"/>
</dbReference>
<dbReference type="InterPro" id="IPR004529">
    <property type="entry name" value="Phe-tRNA-synth_IIc_asu"/>
</dbReference>
<dbReference type="InterPro" id="IPR004188">
    <property type="entry name" value="Phe-tRNA_ligase_II_N"/>
</dbReference>
<dbReference type="InterPro" id="IPR022911">
    <property type="entry name" value="Phe_tRNA_ligase_alpha1_bac"/>
</dbReference>
<dbReference type="InterPro" id="IPR002319">
    <property type="entry name" value="Phenylalanyl-tRNA_Synthase"/>
</dbReference>
<dbReference type="InterPro" id="IPR010978">
    <property type="entry name" value="tRNA-bd_arm"/>
</dbReference>
<dbReference type="NCBIfam" id="TIGR00468">
    <property type="entry name" value="pheS"/>
    <property type="match status" value="1"/>
</dbReference>
<dbReference type="PANTHER" id="PTHR11538:SF41">
    <property type="entry name" value="PHENYLALANINE--TRNA LIGASE, MITOCHONDRIAL"/>
    <property type="match status" value="1"/>
</dbReference>
<dbReference type="PANTHER" id="PTHR11538">
    <property type="entry name" value="PHENYLALANYL-TRNA SYNTHETASE"/>
    <property type="match status" value="1"/>
</dbReference>
<dbReference type="Pfam" id="PF02912">
    <property type="entry name" value="Phe_tRNA-synt_N"/>
    <property type="match status" value="1"/>
</dbReference>
<dbReference type="Pfam" id="PF01409">
    <property type="entry name" value="tRNA-synt_2d"/>
    <property type="match status" value="1"/>
</dbReference>
<dbReference type="SUPFAM" id="SSF55681">
    <property type="entry name" value="Class II aaRS and biotin synthetases"/>
    <property type="match status" value="1"/>
</dbReference>
<dbReference type="SUPFAM" id="SSF46589">
    <property type="entry name" value="tRNA-binding arm"/>
    <property type="match status" value="1"/>
</dbReference>
<dbReference type="PROSITE" id="PS50862">
    <property type="entry name" value="AA_TRNA_LIGASE_II"/>
    <property type="match status" value="1"/>
</dbReference>
<sequence length="350" mass="39240">MLEQLQTLKSEAETQIKEASDLKTLNDLRVKYLGKKGPMTEIMKQMGKLSAEEKPKMGSLANEVRTALTKAITGKQQILETEAINEKLKAETIDITLPGTAPSIGTKHLLTQVIEEMEDMFIGMGYEIAEGPEVELDYYNFEALNLPKDHPARDMQDSFYITENTLLRTQTSPVQARTMEKHDFSKGPIKVICPGKVYRRDNDDATHSHQFTQIEGLVVGENITFADLKGTLTVLAKTMFGEEREIRLRPSFFPFTEPSVEMDISCFKCGGKGCRVCKGTGWIEILGSGMVHPNVLEMSGIDSTRYSGFAFGLGPERVAMLKYAVDDIRHLYTNDLRFTKQFQSTETGEI</sequence>
<keyword id="KW-0030">Aminoacyl-tRNA synthetase</keyword>
<keyword id="KW-0067">ATP-binding</keyword>
<keyword id="KW-0963">Cytoplasm</keyword>
<keyword id="KW-0436">Ligase</keyword>
<keyword id="KW-0460">Magnesium</keyword>
<keyword id="KW-0479">Metal-binding</keyword>
<keyword id="KW-0547">Nucleotide-binding</keyword>
<keyword id="KW-0648">Protein biosynthesis</keyword>
<name>SYFA_LISW6</name>
<gene>
    <name evidence="1" type="primary">pheS</name>
    <name type="ordered locus">lwe1176</name>
</gene>
<comment type="catalytic activity">
    <reaction evidence="1">
        <text>tRNA(Phe) + L-phenylalanine + ATP = L-phenylalanyl-tRNA(Phe) + AMP + diphosphate + H(+)</text>
        <dbReference type="Rhea" id="RHEA:19413"/>
        <dbReference type="Rhea" id="RHEA-COMP:9668"/>
        <dbReference type="Rhea" id="RHEA-COMP:9699"/>
        <dbReference type="ChEBI" id="CHEBI:15378"/>
        <dbReference type="ChEBI" id="CHEBI:30616"/>
        <dbReference type="ChEBI" id="CHEBI:33019"/>
        <dbReference type="ChEBI" id="CHEBI:58095"/>
        <dbReference type="ChEBI" id="CHEBI:78442"/>
        <dbReference type="ChEBI" id="CHEBI:78531"/>
        <dbReference type="ChEBI" id="CHEBI:456215"/>
        <dbReference type="EC" id="6.1.1.20"/>
    </reaction>
</comment>
<comment type="cofactor">
    <cofactor evidence="1">
        <name>Mg(2+)</name>
        <dbReference type="ChEBI" id="CHEBI:18420"/>
    </cofactor>
    <text evidence="1">Binds 2 magnesium ions per tetramer.</text>
</comment>
<comment type="subunit">
    <text evidence="1">Tetramer of two alpha and two beta subunits.</text>
</comment>
<comment type="subcellular location">
    <subcellularLocation>
        <location evidence="1">Cytoplasm</location>
    </subcellularLocation>
</comment>
<comment type="similarity">
    <text evidence="1">Belongs to the class-II aminoacyl-tRNA synthetase family. Phe-tRNA synthetase alpha subunit type 1 subfamily.</text>
</comment>